<evidence type="ECO:0000250" key="1">
    <source>
        <dbReference type="UniProtKB" id="D0VWU3"/>
    </source>
</evidence>
<evidence type="ECO:0000250" key="2">
    <source>
        <dbReference type="UniProtKB" id="Q70KY3"/>
    </source>
</evidence>
<evidence type="ECO:0000255" key="3"/>
<evidence type="ECO:0000305" key="4"/>
<gene>
    <name type="primary">lcc2</name>
</gene>
<organism>
    <name type="scientific">Agaricus bisporus</name>
    <name type="common">White button mushroom</name>
    <dbReference type="NCBI Taxonomy" id="5341"/>
    <lineage>
        <taxon>Eukaryota</taxon>
        <taxon>Fungi</taxon>
        <taxon>Dikarya</taxon>
        <taxon>Basidiomycota</taxon>
        <taxon>Agaricomycotina</taxon>
        <taxon>Agaricomycetes</taxon>
        <taxon>Agaricomycetidae</taxon>
        <taxon>Agaricales</taxon>
        <taxon>Agaricineae</taxon>
        <taxon>Agaricaceae</taxon>
        <taxon>Agaricus</taxon>
    </lineage>
</organism>
<protein>
    <recommendedName>
        <fullName>Laccase-2</fullName>
        <ecNumber evidence="2">1.10.3.2</ecNumber>
    </recommendedName>
    <alternativeName>
        <fullName>Benzenediol:oxygen oxidoreductase 2</fullName>
    </alternativeName>
    <alternativeName>
        <fullName>Diphenol oxidase 2</fullName>
    </alternativeName>
    <alternativeName>
        <fullName>Laccase II</fullName>
    </alternativeName>
    <alternativeName>
        <fullName>Urishiol oxidase 2</fullName>
    </alternativeName>
</protein>
<sequence>MRFSNAFVLVAACISSVLADTKTFNFDLVNTRLAPDGFERDTVVINGEFPGTLVQVNKGDSVRIPVNNKLTSSTMRRSVSIHWHGFFQARTSGQDGPAFVNQCPQPPNTTFTYEFSVADESGTFWYHSHLSTQYCDGLRGAFVVYDPEDPLGHLYDVDDETTVITLAEWYHVLAPDINNEFFSSGIIPVQDSGLINGKGRFNGGPETPFAVVNVEQGKRYRFRVIAISCRPFFTFSVDNHNLTFMEADSVEHDPVEIQNVDIYAAQRVSVILNANQPVDNYWMRAPMTGGNPDRNPNLNISLTLAILRYKGAPEVEPTTVNVPGHKLLDQEMHPIAQEGPGKLGDGPPDKHITLNIAQPNAPFFDINGISYISPTVPVLLQILSGAKRPEDVLPSEQIFFVPKNSLIEVNIPGEGAHPFHLHGHNFDVVLASNDDTFNFVNPPRRDVYPINGGNTTFRFFTDNPGAWFLHCHIDWHLEAGLAIVFAEAPEDNVSGPQSQITPQDWLDLCPEYNAIEPEFQ</sequence>
<comment type="function">
    <text evidence="2">Lignin degradation and detoxification of lignin-derived products.</text>
</comment>
<comment type="catalytic activity">
    <reaction evidence="2">
        <text>4 hydroquinone + O2 = 4 benzosemiquinone + 2 H2O</text>
        <dbReference type="Rhea" id="RHEA:11276"/>
        <dbReference type="ChEBI" id="CHEBI:15377"/>
        <dbReference type="ChEBI" id="CHEBI:15379"/>
        <dbReference type="ChEBI" id="CHEBI:17594"/>
        <dbReference type="ChEBI" id="CHEBI:17977"/>
        <dbReference type="EC" id="1.10.3.2"/>
    </reaction>
</comment>
<comment type="cofactor">
    <cofactor evidence="2">
        <name>Cu cation</name>
        <dbReference type="ChEBI" id="CHEBI:23378"/>
    </cofactor>
    <text evidence="2">Binds 4 Cu cations per monomer.</text>
</comment>
<comment type="subcellular location">
    <subcellularLocation>
        <location evidence="2">Secreted</location>
    </subcellularLocation>
</comment>
<comment type="similarity">
    <text evidence="4">Belongs to the multicopper oxidase family.</text>
</comment>
<feature type="signal peptide">
    <location>
        <begin position="1"/>
        <end position="19"/>
    </location>
</feature>
<feature type="chain" id="PRO_0000002919" description="Laccase-2">
    <location>
        <begin position="20"/>
        <end position="520"/>
    </location>
</feature>
<feature type="domain" description="Plastocyanin-like 1">
    <location>
        <begin position="21"/>
        <end position="145"/>
    </location>
</feature>
<feature type="domain" description="Plastocyanin-like 2">
    <location>
        <begin position="157"/>
        <end position="305"/>
    </location>
</feature>
<feature type="domain" description="Plastocyanin-like 3">
    <location>
        <begin position="375"/>
        <end position="488"/>
    </location>
</feature>
<feature type="binding site" description="type 2 copper site" evidence="1">
    <location>
        <position position="82"/>
    </location>
    <ligand>
        <name>Cu cation</name>
        <dbReference type="ChEBI" id="CHEBI:23378"/>
        <label>1</label>
    </ligand>
</feature>
<feature type="binding site" description="type 3 copper site" evidence="1">
    <location>
        <position position="84"/>
    </location>
    <ligand>
        <name>Cu cation</name>
        <dbReference type="ChEBI" id="CHEBI:23378"/>
        <label>2</label>
    </ligand>
</feature>
<feature type="binding site" description="type 3 copper site" evidence="1">
    <location>
        <position position="127"/>
    </location>
    <ligand>
        <name>Cu cation</name>
        <dbReference type="ChEBI" id="CHEBI:23378"/>
        <label>2</label>
    </ligand>
</feature>
<feature type="binding site" description="type 3 copper site" evidence="1">
    <location>
        <position position="129"/>
    </location>
    <ligand>
        <name>Cu cation</name>
        <dbReference type="ChEBI" id="CHEBI:23378"/>
        <label>3</label>
    </ligand>
</feature>
<feature type="binding site" description="type 1 copper site" evidence="1">
    <location>
        <position position="417"/>
    </location>
    <ligand>
        <name>Cu cation</name>
        <dbReference type="ChEBI" id="CHEBI:23378"/>
        <label>4</label>
    </ligand>
</feature>
<feature type="binding site" description="type 2 copper site" evidence="1">
    <location>
        <position position="420"/>
    </location>
    <ligand>
        <name>Cu cation</name>
        <dbReference type="ChEBI" id="CHEBI:23378"/>
        <label>1</label>
    </ligand>
</feature>
<feature type="binding site" description="type 3 copper site" evidence="1">
    <location>
        <position position="422"/>
    </location>
    <ligand>
        <name>Cu cation</name>
        <dbReference type="ChEBI" id="CHEBI:23378"/>
        <label>3</label>
    </ligand>
</feature>
<feature type="binding site" description="type 3 copper site" evidence="1">
    <location>
        <position position="470"/>
    </location>
    <ligand>
        <name>Cu cation</name>
        <dbReference type="ChEBI" id="CHEBI:23378"/>
        <label>3</label>
    </ligand>
</feature>
<feature type="binding site" description="type 1 copper site" evidence="1">
    <location>
        <position position="471"/>
    </location>
    <ligand>
        <name>Cu cation</name>
        <dbReference type="ChEBI" id="CHEBI:23378"/>
        <label>4</label>
    </ligand>
</feature>
<feature type="binding site" description="type 3 copper site" evidence="1">
    <location>
        <position position="472"/>
    </location>
    <ligand>
        <name>Cu cation</name>
        <dbReference type="ChEBI" id="CHEBI:23378"/>
        <label>2</label>
    </ligand>
</feature>
<feature type="binding site" description="type 1 copper site" evidence="1">
    <location>
        <position position="476"/>
    </location>
    <ligand>
        <name>Cu cation</name>
        <dbReference type="ChEBI" id="CHEBI:23378"/>
        <label>4</label>
    </ligand>
</feature>
<feature type="glycosylation site" description="N-linked (GlcNAc...) asparagine" evidence="3">
    <location>
        <position position="108"/>
    </location>
</feature>
<feature type="glycosylation site" description="N-linked (GlcNAc...) asparagine" evidence="3">
    <location>
        <position position="241"/>
    </location>
</feature>
<feature type="glycosylation site" description="N-linked (GlcNAc...) asparagine" evidence="3">
    <location>
        <position position="299"/>
    </location>
</feature>
<feature type="glycosylation site" description="N-linked (GlcNAc...) asparagine" evidence="3">
    <location>
        <position position="492"/>
    </location>
</feature>
<feature type="disulfide bond" evidence="2">
    <location>
        <begin position="103"/>
        <end position="509"/>
    </location>
</feature>
<feature type="disulfide bond" evidence="1">
    <location>
        <begin position="135"/>
        <end position="229"/>
    </location>
</feature>
<dbReference type="EC" id="1.10.3.2" evidence="2"/>
<dbReference type="EMBL" id="L10663">
    <property type="protein sequence ID" value="AAA17035.1"/>
    <property type="molecule type" value="mRNA"/>
</dbReference>
<dbReference type="SMR" id="Q12542"/>
<dbReference type="CAZy" id="AA1">
    <property type="family name" value="Auxiliary Activities 1"/>
</dbReference>
<dbReference type="GlyCosmos" id="Q12542">
    <property type="glycosylation" value="4 sites, No reported glycans"/>
</dbReference>
<dbReference type="GO" id="GO:0005576">
    <property type="term" value="C:extracellular region"/>
    <property type="evidence" value="ECO:0007669"/>
    <property type="project" value="UniProtKB-SubCell"/>
</dbReference>
<dbReference type="GO" id="GO:0005507">
    <property type="term" value="F:copper ion binding"/>
    <property type="evidence" value="ECO:0007669"/>
    <property type="project" value="InterPro"/>
</dbReference>
<dbReference type="GO" id="GO:0052716">
    <property type="term" value="F:hydroquinone:oxygen oxidoreductase activity"/>
    <property type="evidence" value="ECO:0007669"/>
    <property type="project" value="UniProtKB-EC"/>
</dbReference>
<dbReference type="GO" id="GO:0046274">
    <property type="term" value="P:lignin catabolic process"/>
    <property type="evidence" value="ECO:0007669"/>
    <property type="project" value="UniProtKB-KW"/>
</dbReference>
<dbReference type="CDD" id="cd13856">
    <property type="entry name" value="CuRO_1_Tv-LCC_like"/>
    <property type="match status" value="1"/>
</dbReference>
<dbReference type="CDD" id="cd13882">
    <property type="entry name" value="CuRO_2_Tv-LCC_like"/>
    <property type="match status" value="1"/>
</dbReference>
<dbReference type="CDD" id="cd13903">
    <property type="entry name" value="CuRO_3_Tv-LCC_like"/>
    <property type="match status" value="1"/>
</dbReference>
<dbReference type="FunFam" id="2.60.40.420:FF:000045">
    <property type="entry name" value="Laccase 2"/>
    <property type="match status" value="1"/>
</dbReference>
<dbReference type="Gene3D" id="2.60.40.420">
    <property type="entry name" value="Cupredoxins - blue copper proteins"/>
    <property type="match status" value="3"/>
</dbReference>
<dbReference type="InterPro" id="IPR011707">
    <property type="entry name" value="Cu-oxidase-like_N"/>
</dbReference>
<dbReference type="InterPro" id="IPR001117">
    <property type="entry name" value="Cu-oxidase_2nd"/>
</dbReference>
<dbReference type="InterPro" id="IPR011706">
    <property type="entry name" value="Cu-oxidase_C"/>
</dbReference>
<dbReference type="InterPro" id="IPR045087">
    <property type="entry name" value="Cu-oxidase_fam"/>
</dbReference>
<dbReference type="InterPro" id="IPR033138">
    <property type="entry name" value="Cu_oxidase_CS"/>
</dbReference>
<dbReference type="InterPro" id="IPR002355">
    <property type="entry name" value="Cu_oxidase_Cu_BS"/>
</dbReference>
<dbReference type="InterPro" id="IPR008972">
    <property type="entry name" value="Cupredoxin"/>
</dbReference>
<dbReference type="PANTHER" id="PTHR11709:SF511">
    <property type="entry name" value="LACCASE"/>
    <property type="match status" value="1"/>
</dbReference>
<dbReference type="PANTHER" id="PTHR11709">
    <property type="entry name" value="MULTI-COPPER OXIDASE"/>
    <property type="match status" value="1"/>
</dbReference>
<dbReference type="Pfam" id="PF00394">
    <property type="entry name" value="Cu-oxidase"/>
    <property type="match status" value="1"/>
</dbReference>
<dbReference type="Pfam" id="PF07731">
    <property type="entry name" value="Cu-oxidase_2"/>
    <property type="match status" value="1"/>
</dbReference>
<dbReference type="Pfam" id="PF07732">
    <property type="entry name" value="Cu-oxidase_3"/>
    <property type="match status" value="1"/>
</dbReference>
<dbReference type="SUPFAM" id="SSF49503">
    <property type="entry name" value="Cupredoxins"/>
    <property type="match status" value="3"/>
</dbReference>
<dbReference type="PROSITE" id="PS00079">
    <property type="entry name" value="MULTICOPPER_OXIDASE1"/>
    <property type="match status" value="2"/>
</dbReference>
<dbReference type="PROSITE" id="PS00080">
    <property type="entry name" value="MULTICOPPER_OXIDASE2"/>
    <property type="match status" value="1"/>
</dbReference>
<name>LAC2_AGABI</name>
<accession>Q12542</accession>
<proteinExistence type="evidence at protein level"/>
<keyword id="KW-0186">Copper</keyword>
<keyword id="KW-0903">Direct protein sequencing</keyword>
<keyword id="KW-1015">Disulfide bond</keyword>
<keyword id="KW-0325">Glycoprotein</keyword>
<keyword id="KW-0439">Lignin degradation</keyword>
<keyword id="KW-0479">Metal-binding</keyword>
<keyword id="KW-0560">Oxidoreductase</keyword>
<keyword id="KW-0677">Repeat</keyword>
<keyword id="KW-0964">Secreted</keyword>
<keyword id="KW-0732">Signal</keyword>
<reference key="1">
    <citation type="journal article" date="1993" name="J. Gen. Microbiol.">
        <title>Identification of two laccase genes in the cultivated mushroom Agaricus bisporus.</title>
        <authorList>
            <person name="Perry C.R."/>
            <person name="Smith M."/>
            <person name="Britnell C.H."/>
            <person name="Wood D.A."/>
            <person name="Thurston C.F."/>
        </authorList>
    </citation>
    <scope>NUCLEOTIDE SEQUENCE [MRNA]</scope>
    <scope>PARTIAL PROTEIN SEQUENCE</scope>
    <source>
        <strain>D649</strain>
    </source>
</reference>